<dbReference type="EC" id="3.1.3.-" evidence="1"/>
<dbReference type="EMBL" id="AE017220">
    <property type="protein sequence ID" value="AAX66204.1"/>
    <property type="molecule type" value="Genomic_DNA"/>
</dbReference>
<dbReference type="SMR" id="Q57M58"/>
<dbReference type="KEGG" id="sec:SCH_2298"/>
<dbReference type="HOGENOM" id="CLU_106705_1_0_6"/>
<dbReference type="UniPathway" id="UPA00451"/>
<dbReference type="Proteomes" id="UP000000538">
    <property type="component" value="Chromosome"/>
</dbReference>
<dbReference type="GO" id="GO:0042597">
    <property type="term" value="C:periplasmic space"/>
    <property type="evidence" value="ECO:0007669"/>
    <property type="project" value="UniProtKB-SubCell"/>
</dbReference>
<dbReference type="GO" id="GO:0016791">
    <property type="term" value="F:phosphatase activity"/>
    <property type="evidence" value="ECO:0007669"/>
    <property type="project" value="UniProtKB-UniRule"/>
</dbReference>
<dbReference type="GO" id="GO:0008653">
    <property type="term" value="P:lipopolysaccharide metabolic process"/>
    <property type="evidence" value="ECO:0007669"/>
    <property type="project" value="UniProtKB-UniRule"/>
</dbReference>
<dbReference type="CDD" id="cd07040">
    <property type="entry name" value="HP"/>
    <property type="match status" value="1"/>
</dbReference>
<dbReference type="Gene3D" id="3.40.50.1240">
    <property type="entry name" value="Phosphoglycerate mutase-like"/>
    <property type="match status" value="1"/>
</dbReference>
<dbReference type="HAMAP" id="MF_01868">
    <property type="entry name" value="Ais"/>
    <property type="match status" value="1"/>
</dbReference>
<dbReference type="InterPro" id="IPR029033">
    <property type="entry name" value="His_PPase_superfam"/>
</dbReference>
<dbReference type="InterPro" id="IPR011310">
    <property type="entry name" value="LipoPS_heptP_Pase"/>
</dbReference>
<dbReference type="NCBIfam" id="NF011945">
    <property type="entry name" value="PRK15416.1"/>
    <property type="match status" value="1"/>
</dbReference>
<dbReference type="PIRSF" id="PIRSF011416">
    <property type="entry name" value="Ais-TraG-AfrS"/>
    <property type="match status" value="1"/>
</dbReference>
<dbReference type="SUPFAM" id="SSF53254">
    <property type="entry name" value="Phosphoglycerate mutase-like"/>
    <property type="match status" value="1"/>
</dbReference>
<keyword id="KW-0378">Hydrolase</keyword>
<keyword id="KW-0574">Periplasm</keyword>
<keyword id="KW-0732">Signal</keyword>
<sequence length="201" mass="21995">MLAFTLRFIKNKRYLATLAGALVIIAGLTSQHAWSGNGLPQINGKALAALAKQHPVVVLFRHVERCDRSDNTCLSDSTGITVNGAQDARALGKAFSADIQNYNLYSSNTVRTIQSATWFSAGRSLTVDKKMMDCGSGIYASINTLLKKSQNKNIVIFTHNHCLTYIAKNKRGVKFDPDYLNALVMHAENGKLFLDGEFVPG</sequence>
<name>AIS_SALCH</name>
<protein>
    <recommendedName>
        <fullName evidence="1">Lipopolysaccharide core heptose(II)-phosphate phosphatase</fullName>
        <ecNumber evidence="1">3.1.3.-</ecNumber>
    </recommendedName>
</protein>
<organism>
    <name type="scientific">Salmonella choleraesuis (strain SC-B67)</name>
    <dbReference type="NCBI Taxonomy" id="321314"/>
    <lineage>
        <taxon>Bacteria</taxon>
        <taxon>Pseudomonadati</taxon>
        <taxon>Pseudomonadota</taxon>
        <taxon>Gammaproteobacteria</taxon>
        <taxon>Enterobacterales</taxon>
        <taxon>Enterobacteriaceae</taxon>
        <taxon>Salmonella</taxon>
    </lineage>
</organism>
<feature type="signal peptide" evidence="1">
    <location>
        <begin position="1"/>
        <end position="35"/>
    </location>
</feature>
<feature type="chain" id="PRO_0000380576" description="Lipopolysaccharide core heptose(II)-phosphate phosphatase">
    <location>
        <begin position="36"/>
        <end position="201"/>
    </location>
</feature>
<proteinExistence type="inferred from homology"/>
<evidence type="ECO:0000255" key="1">
    <source>
        <dbReference type="HAMAP-Rule" id="MF_01868"/>
    </source>
</evidence>
<reference key="1">
    <citation type="journal article" date="2005" name="Nucleic Acids Res.">
        <title>The genome sequence of Salmonella enterica serovar Choleraesuis, a highly invasive and resistant zoonotic pathogen.</title>
        <authorList>
            <person name="Chiu C.-H."/>
            <person name="Tang P."/>
            <person name="Chu C."/>
            <person name="Hu S."/>
            <person name="Bao Q."/>
            <person name="Yu J."/>
            <person name="Chou Y.-Y."/>
            <person name="Wang H.-S."/>
            <person name="Lee Y.-S."/>
        </authorList>
    </citation>
    <scope>NUCLEOTIDE SEQUENCE [LARGE SCALE GENOMIC DNA]</scope>
    <source>
        <strain>SC-B67</strain>
    </source>
</reference>
<comment type="function">
    <text evidence="1">Catalyzes the dephosphorylation of heptose(II) of the outer membrane lipopolysaccharide core.</text>
</comment>
<comment type="pathway">
    <text evidence="1">Bacterial outer membrane biogenesis; lipopolysaccharide metabolism.</text>
</comment>
<comment type="subcellular location">
    <subcellularLocation>
        <location evidence="1">Periplasm</location>
    </subcellularLocation>
</comment>
<comment type="similarity">
    <text evidence="1">Belongs to the phosphoglycerate mutase family. Ais subfamily.</text>
</comment>
<accession>Q57M58</accession>
<gene>
    <name evidence="1" type="primary">ais</name>
    <name type="ordered locus">SCH_2298</name>
</gene>